<feature type="chain" id="PRO_0000338615" description="GTP-binding protein 8">
    <location>
        <begin position="1"/>
        <end position="286"/>
    </location>
</feature>
<feature type="domain" description="EngB-type G">
    <location>
        <begin position="105"/>
        <end position="278"/>
    </location>
</feature>
<feature type="binding site" evidence="1">
    <location>
        <begin position="113"/>
        <end position="120"/>
    </location>
    <ligand>
        <name>GTP</name>
        <dbReference type="ChEBI" id="CHEBI:37565"/>
    </ligand>
</feature>
<feature type="binding site" evidence="1">
    <location>
        <position position="120"/>
    </location>
    <ligand>
        <name>Mg(2+)</name>
        <dbReference type="ChEBI" id="CHEBI:18420"/>
    </ligand>
</feature>
<feature type="binding site" evidence="1">
    <location>
        <begin position="142"/>
        <end position="146"/>
    </location>
    <ligand>
        <name>GTP</name>
        <dbReference type="ChEBI" id="CHEBI:37565"/>
    </ligand>
</feature>
<feature type="binding site" evidence="1">
    <location>
        <position position="144"/>
    </location>
    <ligand>
        <name>Mg(2+)</name>
        <dbReference type="ChEBI" id="CHEBI:18420"/>
    </ligand>
</feature>
<feature type="binding site" evidence="1">
    <location>
        <begin position="160"/>
        <end position="163"/>
    </location>
    <ligand>
        <name>GTP</name>
        <dbReference type="ChEBI" id="CHEBI:37565"/>
    </ligand>
</feature>
<feature type="binding site" evidence="1">
    <location>
        <begin position="222"/>
        <end position="225"/>
    </location>
    <ligand>
        <name>GTP</name>
        <dbReference type="ChEBI" id="CHEBI:37565"/>
    </ligand>
</feature>
<feature type="binding site" evidence="1">
    <location>
        <begin position="257"/>
        <end position="259"/>
    </location>
    <ligand>
        <name>GTP</name>
        <dbReference type="ChEBI" id="CHEBI:37565"/>
    </ligand>
</feature>
<protein>
    <recommendedName>
        <fullName>GTP-binding protein 8</fullName>
    </recommendedName>
</protein>
<organism>
    <name type="scientific">Danio rerio</name>
    <name type="common">Zebrafish</name>
    <name type="synonym">Brachydanio rerio</name>
    <dbReference type="NCBI Taxonomy" id="7955"/>
    <lineage>
        <taxon>Eukaryota</taxon>
        <taxon>Metazoa</taxon>
        <taxon>Chordata</taxon>
        <taxon>Craniata</taxon>
        <taxon>Vertebrata</taxon>
        <taxon>Euteleostomi</taxon>
        <taxon>Actinopterygii</taxon>
        <taxon>Neopterygii</taxon>
        <taxon>Teleostei</taxon>
        <taxon>Ostariophysi</taxon>
        <taxon>Cypriniformes</taxon>
        <taxon>Danionidae</taxon>
        <taxon>Danioninae</taxon>
        <taxon>Danio</taxon>
    </lineage>
</organism>
<name>GTPB8_DANRE</name>
<evidence type="ECO:0000250" key="1"/>
<evidence type="ECO:0000305" key="2"/>
<keyword id="KW-0342">GTP-binding</keyword>
<keyword id="KW-0460">Magnesium</keyword>
<keyword id="KW-0479">Metal-binding</keyword>
<keyword id="KW-0547">Nucleotide-binding</keyword>
<keyword id="KW-1185">Reference proteome</keyword>
<proteinExistence type="inferred from homology"/>
<dbReference type="EMBL" id="BX928746">
    <property type="protein sequence ID" value="CAQ13662.1"/>
    <property type="molecule type" value="Genomic_DNA"/>
</dbReference>
<dbReference type="RefSeq" id="NP_001119874.1">
    <property type="nucleotide sequence ID" value="NM_001126402.1"/>
</dbReference>
<dbReference type="SMR" id="B0S8I0"/>
<dbReference type="FunCoup" id="B0S8I0">
    <property type="interactions" value="427"/>
</dbReference>
<dbReference type="STRING" id="7955.ENSDARP00000101684"/>
<dbReference type="PaxDb" id="7955-ENSDARP00000101684"/>
<dbReference type="Ensembl" id="ENSDART00000111039">
    <property type="protein sequence ID" value="ENSDARP00000101684"/>
    <property type="gene ID" value="ENSDARG00000075033"/>
</dbReference>
<dbReference type="GeneID" id="561913"/>
<dbReference type="KEGG" id="dre:561913"/>
<dbReference type="AGR" id="ZFIN:ZDB-GENE-070912-719"/>
<dbReference type="CTD" id="29083"/>
<dbReference type="ZFIN" id="ZDB-GENE-070912-719">
    <property type="gene designation" value="gtpbp8"/>
</dbReference>
<dbReference type="eggNOG" id="KOG2486">
    <property type="taxonomic scope" value="Eukaryota"/>
</dbReference>
<dbReference type="HOGENOM" id="CLU_033732_5_0_1"/>
<dbReference type="InParanoid" id="B0S8I0"/>
<dbReference type="OMA" id="RMDHAPP"/>
<dbReference type="OrthoDB" id="391988at2759"/>
<dbReference type="PhylomeDB" id="B0S8I0"/>
<dbReference type="TreeFam" id="TF331089"/>
<dbReference type="PRO" id="PR:B0S8I0"/>
<dbReference type="Proteomes" id="UP000000437">
    <property type="component" value="Alternate scaffold 9"/>
</dbReference>
<dbReference type="Proteomes" id="UP000000437">
    <property type="component" value="Chromosome 9"/>
</dbReference>
<dbReference type="Bgee" id="ENSDARG00000075033">
    <property type="expression patterns" value="Expressed in blastula and 19 other cell types or tissues"/>
</dbReference>
<dbReference type="GO" id="GO:0005739">
    <property type="term" value="C:mitochondrion"/>
    <property type="evidence" value="ECO:0000318"/>
    <property type="project" value="GO_Central"/>
</dbReference>
<dbReference type="GO" id="GO:0005525">
    <property type="term" value="F:GTP binding"/>
    <property type="evidence" value="ECO:0007669"/>
    <property type="project" value="UniProtKB-KW"/>
</dbReference>
<dbReference type="GO" id="GO:0046872">
    <property type="term" value="F:metal ion binding"/>
    <property type="evidence" value="ECO:0007669"/>
    <property type="project" value="UniProtKB-KW"/>
</dbReference>
<dbReference type="CDD" id="cd01876">
    <property type="entry name" value="YihA_EngB"/>
    <property type="match status" value="1"/>
</dbReference>
<dbReference type="FunFam" id="3.40.50.300:FF:000857">
    <property type="entry name" value="GTP-binding protein 8 isoform X1"/>
    <property type="match status" value="1"/>
</dbReference>
<dbReference type="Gene3D" id="3.40.50.300">
    <property type="entry name" value="P-loop containing nucleotide triphosphate hydrolases"/>
    <property type="match status" value="1"/>
</dbReference>
<dbReference type="InterPro" id="IPR052279">
    <property type="entry name" value="EngB_GTPase"/>
</dbReference>
<dbReference type="InterPro" id="IPR030393">
    <property type="entry name" value="G_ENGB_dom"/>
</dbReference>
<dbReference type="InterPro" id="IPR006073">
    <property type="entry name" value="GTP-bd"/>
</dbReference>
<dbReference type="InterPro" id="IPR019987">
    <property type="entry name" value="GTP-bd_ribosome_bio_YsxC"/>
</dbReference>
<dbReference type="InterPro" id="IPR027417">
    <property type="entry name" value="P-loop_NTPase"/>
</dbReference>
<dbReference type="NCBIfam" id="TIGR03598">
    <property type="entry name" value="GTPase_YsxC"/>
    <property type="match status" value="1"/>
</dbReference>
<dbReference type="PANTHER" id="PTHR46498">
    <property type="entry name" value="GTP-BINDING PROTEIN 8"/>
    <property type="match status" value="1"/>
</dbReference>
<dbReference type="PANTHER" id="PTHR46498:SF1">
    <property type="entry name" value="GTP-BINDING PROTEIN 8"/>
    <property type="match status" value="1"/>
</dbReference>
<dbReference type="Pfam" id="PF01926">
    <property type="entry name" value="MMR_HSR1"/>
    <property type="match status" value="1"/>
</dbReference>
<dbReference type="SUPFAM" id="SSF52540">
    <property type="entry name" value="P-loop containing nucleoside triphosphate hydrolases"/>
    <property type="match status" value="1"/>
</dbReference>
<dbReference type="PROSITE" id="PS51706">
    <property type="entry name" value="G_ENGB"/>
    <property type="match status" value="1"/>
</dbReference>
<accession>B0S8I0</accession>
<sequence length="286" mass="32294">MLRIKALAPLQTRVSCWLLVLQRGHRLASIKHVCQLSERKRQSLLYPFSDLEGHLFSQVNQAQFKIFHPSLEELRQAETLFTPSSKHVINYSTSAVRMDHVPILKQPEVCFMGRSNVGKSSLIRALFSLAPEVEVRVSKTPGHTKKLNFFTVGKAFTLVDMPGYGHMAPQDFVEMVEPYLQERHNLARTFLLVDASAGLQSTDLVAVEMFEEFNLPYVLVVTKIDRTRQGALLALALELQDFIKKQTTACFPQPFLVSSVQFSGIHLLRCFIAHVTGKQLLSAKQS</sequence>
<comment type="cofactor">
    <cofactor evidence="1">
        <name>Mg(2+)</name>
        <dbReference type="ChEBI" id="CHEBI:18420"/>
    </cofactor>
</comment>
<comment type="similarity">
    <text evidence="2">Belongs to the TRAFAC class TrmE-Era-EngA-EngB-Septin-like GTPase superfamily. EngB GTPase family.</text>
</comment>
<gene>
    <name type="primary">gtpbp8</name>
    <name type="ORF">si:rp71-84d19.3</name>
</gene>
<reference key="1">
    <citation type="journal article" date="2013" name="Nature">
        <title>The zebrafish reference genome sequence and its relationship to the human genome.</title>
        <authorList>
            <person name="Howe K."/>
            <person name="Clark M.D."/>
            <person name="Torroja C.F."/>
            <person name="Torrance J."/>
            <person name="Berthelot C."/>
            <person name="Muffato M."/>
            <person name="Collins J.E."/>
            <person name="Humphray S."/>
            <person name="McLaren K."/>
            <person name="Matthews L."/>
            <person name="McLaren S."/>
            <person name="Sealy I."/>
            <person name="Caccamo M."/>
            <person name="Churcher C."/>
            <person name="Scott C."/>
            <person name="Barrett J.C."/>
            <person name="Koch R."/>
            <person name="Rauch G.J."/>
            <person name="White S."/>
            <person name="Chow W."/>
            <person name="Kilian B."/>
            <person name="Quintais L.T."/>
            <person name="Guerra-Assuncao J.A."/>
            <person name="Zhou Y."/>
            <person name="Gu Y."/>
            <person name="Yen J."/>
            <person name="Vogel J.H."/>
            <person name="Eyre T."/>
            <person name="Redmond S."/>
            <person name="Banerjee R."/>
            <person name="Chi J."/>
            <person name="Fu B."/>
            <person name="Langley E."/>
            <person name="Maguire S.F."/>
            <person name="Laird G.K."/>
            <person name="Lloyd D."/>
            <person name="Kenyon E."/>
            <person name="Donaldson S."/>
            <person name="Sehra H."/>
            <person name="Almeida-King J."/>
            <person name="Loveland J."/>
            <person name="Trevanion S."/>
            <person name="Jones M."/>
            <person name="Quail M."/>
            <person name="Willey D."/>
            <person name="Hunt A."/>
            <person name="Burton J."/>
            <person name="Sims S."/>
            <person name="McLay K."/>
            <person name="Plumb B."/>
            <person name="Davis J."/>
            <person name="Clee C."/>
            <person name="Oliver K."/>
            <person name="Clark R."/>
            <person name="Riddle C."/>
            <person name="Elliot D."/>
            <person name="Threadgold G."/>
            <person name="Harden G."/>
            <person name="Ware D."/>
            <person name="Begum S."/>
            <person name="Mortimore B."/>
            <person name="Kerry G."/>
            <person name="Heath P."/>
            <person name="Phillimore B."/>
            <person name="Tracey A."/>
            <person name="Corby N."/>
            <person name="Dunn M."/>
            <person name="Johnson C."/>
            <person name="Wood J."/>
            <person name="Clark S."/>
            <person name="Pelan S."/>
            <person name="Griffiths G."/>
            <person name="Smith M."/>
            <person name="Glithero R."/>
            <person name="Howden P."/>
            <person name="Barker N."/>
            <person name="Lloyd C."/>
            <person name="Stevens C."/>
            <person name="Harley J."/>
            <person name="Holt K."/>
            <person name="Panagiotidis G."/>
            <person name="Lovell J."/>
            <person name="Beasley H."/>
            <person name="Henderson C."/>
            <person name="Gordon D."/>
            <person name="Auger K."/>
            <person name="Wright D."/>
            <person name="Collins J."/>
            <person name="Raisen C."/>
            <person name="Dyer L."/>
            <person name="Leung K."/>
            <person name="Robertson L."/>
            <person name="Ambridge K."/>
            <person name="Leongamornlert D."/>
            <person name="McGuire S."/>
            <person name="Gilderthorp R."/>
            <person name="Griffiths C."/>
            <person name="Manthravadi D."/>
            <person name="Nichol S."/>
            <person name="Barker G."/>
            <person name="Whitehead S."/>
            <person name="Kay M."/>
            <person name="Brown J."/>
            <person name="Murnane C."/>
            <person name="Gray E."/>
            <person name="Humphries M."/>
            <person name="Sycamore N."/>
            <person name="Barker D."/>
            <person name="Saunders D."/>
            <person name="Wallis J."/>
            <person name="Babbage A."/>
            <person name="Hammond S."/>
            <person name="Mashreghi-Mohammadi M."/>
            <person name="Barr L."/>
            <person name="Martin S."/>
            <person name="Wray P."/>
            <person name="Ellington A."/>
            <person name="Matthews N."/>
            <person name="Ellwood M."/>
            <person name="Woodmansey R."/>
            <person name="Clark G."/>
            <person name="Cooper J."/>
            <person name="Tromans A."/>
            <person name="Grafham D."/>
            <person name="Skuce C."/>
            <person name="Pandian R."/>
            <person name="Andrews R."/>
            <person name="Harrison E."/>
            <person name="Kimberley A."/>
            <person name="Garnett J."/>
            <person name="Fosker N."/>
            <person name="Hall R."/>
            <person name="Garner P."/>
            <person name="Kelly D."/>
            <person name="Bird C."/>
            <person name="Palmer S."/>
            <person name="Gehring I."/>
            <person name="Berger A."/>
            <person name="Dooley C.M."/>
            <person name="Ersan-Urun Z."/>
            <person name="Eser C."/>
            <person name="Geiger H."/>
            <person name="Geisler M."/>
            <person name="Karotki L."/>
            <person name="Kirn A."/>
            <person name="Konantz J."/>
            <person name="Konantz M."/>
            <person name="Oberlander M."/>
            <person name="Rudolph-Geiger S."/>
            <person name="Teucke M."/>
            <person name="Lanz C."/>
            <person name="Raddatz G."/>
            <person name="Osoegawa K."/>
            <person name="Zhu B."/>
            <person name="Rapp A."/>
            <person name="Widaa S."/>
            <person name="Langford C."/>
            <person name="Yang F."/>
            <person name="Schuster S.C."/>
            <person name="Carter N.P."/>
            <person name="Harrow J."/>
            <person name="Ning Z."/>
            <person name="Herrero J."/>
            <person name="Searle S.M."/>
            <person name="Enright A."/>
            <person name="Geisler R."/>
            <person name="Plasterk R.H."/>
            <person name="Lee C."/>
            <person name="Westerfield M."/>
            <person name="de Jong P.J."/>
            <person name="Zon L.I."/>
            <person name="Postlethwait J.H."/>
            <person name="Nusslein-Volhard C."/>
            <person name="Hubbard T.J."/>
            <person name="Roest Crollius H."/>
            <person name="Rogers J."/>
            <person name="Stemple D.L."/>
        </authorList>
    </citation>
    <scope>NUCLEOTIDE SEQUENCE [LARGE SCALE GENOMIC DNA]</scope>
    <source>
        <strain>Tuebingen</strain>
    </source>
</reference>